<evidence type="ECO:0000255" key="1"/>
<evidence type="ECO:0000255" key="2">
    <source>
        <dbReference type="PROSITE-ProRule" id="PRU00114"/>
    </source>
</evidence>
<evidence type="ECO:0000255" key="3">
    <source>
        <dbReference type="PROSITE-ProRule" id="PRU00498"/>
    </source>
</evidence>
<evidence type="ECO:0000303" key="4">
    <source>
    </source>
</evidence>
<evidence type="ECO:0000303" key="5">
    <source>
    </source>
</evidence>
<evidence type="ECO:0000303" key="6">
    <source>
    </source>
</evidence>
<evidence type="ECO:0000303" key="7">
    <source>
    </source>
</evidence>
<evidence type="ECO:0000303" key="8">
    <source>
    </source>
</evidence>
<evidence type="ECO:0000303" key="9">
    <source ref="2"/>
</evidence>
<evidence type="ECO:0000305" key="10"/>
<evidence type="ECO:0000312" key="11">
    <source>
        <dbReference type="HGNC" id="HGNC:12290"/>
    </source>
</evidence>
<evidence type="ECO:0007829" key="12">
    <source>
        <dbReference type="PDB" id="8JBV"/>
    </source>
</evidence>
<keyword id="KW-0002">3D-structure</keyword>
<keyword id="KW-1064">Adaptive immunity</keyword>
<keyword id="KW-1003">Cell membrane</keyword>
<keyword id="KW-1015">Disulfide bond</keyword>
<keyword id="KW-0325">Glycoprotein</keyword>
<keyword id="KW-0391">Immunity</keyword>
<keyword id="KW-0393">Immunoglobulin domain</keyword>
<keyword id="KW-0399">Innate immunity</keyword>
<keyword id="KW-0472">Membrane</keyword>
<keyword id="KW-0675">Receptor</keyword>
<keyword id="KW-1185">Reference proteome</keyword>
<keyword id="KW-0732">Signal</keyword>
<keyword id="KW-1279">T cell receptor</keyword>
<organism>
    <name type="scientific">Homo sapiens</name>
    <name type="common">Human</name>
    <dbReference type="NCBI Taxonomy" id="9606"/>
    <lineage>
        <taxon>Eukaryota</taxon>
        <taxon>Metazoa</taxon>
        <taxon>Chordata</taxon>
        <taxon>Craniata</taxon>
        <taxon>Vertebrata</taxon>
        <taxon>Euteleostomi</taxon>
        <taxon>Mammalia</taxon>
        <taxon>Eutheria</taxon>
        <taxon>Euarchontoglires</taxon>
        <taxon>Primates</taxon>
        <taxon>Haplorrhini</taxon>
        <taxon>Catarrhini</taxon>
        <taxon>Hominidae</taxon>
        <taxon>Homo</taxon>
    </lineage>
</organism>
<proteinExistence type="evidence at protein level"/>
<gene>
    <name evidence="9" type="primary">TRGV5</name>
    <name evidence="11" type="synonym">TCRGV5</name>
</gene>
<reference key="1">
    <citation type="journal article" date="2003" name="Nature">
        <title>The DNA sequence of human chromosome 7.</title>
        <authorList>
            <person name="Hillier L.W."/>
            <person name="Fulton R.S."/>
            <person name="Fulton L.A."/>
            <person name="Graves T.A."/>
            <person name="Pepin K.H."/>
            <person name="Wagner-McPherson C."/>
            <person name="Layman D."/>
            <person name="Maas J."/>
            <person name="Jaeger S."/>
            <person name="Walker R."/>
            <person name="Wylie K."/>
            <person name="Sekhon M."/>
            <person name="Becker M.C."/>
            <person name="O'Laughlin M.D."/>
            <person name="Schaller M.E."/>
            <person name="Fewell G.A."/>
            <person name="Delehaunty K.D."/>
            <person name="Miner T.L."/>
            <person name="Nash W.E."/>
            <person name="Cordes M."/>
            <person name="Du H."/>
            <person name="Sun H."/>
            <person name="Edwards J."/>
            <person name="Bradshaw-Cordum H."/>
            <person name="Ali J."/>
            <person name="Andrews S."/>
            <person name="Isak A."/>
            <person name="Vanbrunt A."/>
            <person name="Nguyen C."/>
            <person name="Du F."/>
            <person name="Lamar B."/>
            <person name="Courtney L."/>
            <person name="Kalicki J."/>
            <person name="Ozersky P."/>
            <person name="Bielicki L."/>
            <person name="Scott K."/>
            <person name="Holmes A."/>
            <person name="Harkins R."/>
            <person name="Harris A."/>
            <person name="Strong C.M."/>
            <person name="Hou S."/>
            <person name="Tomlinson C."/>
            <person name="Dauphin-Kohlberg S."/>
            <person name="Kozlowicz-Reilly A."/>
            <person name="Leonard S."/>
            <person name="Rohlfing T."/>
            <person name="Rock S.M."/>
            <person name="Tin-Wollam A.-M."/>
            <person name="Abbott A."/>
            <person name="Minx P."/>
            <person name="Maupin R."/>
            <person name="Strowmatt C."/>
            <person name="Latreille P."/>
            <person name="Miller N."/>
            <person name="Johnson D."/>
            <person name="Murray J."/>
            <person name="Woessner J.P."/>
            <person name="Wendl M.C."/>
            <person name="Yang S.-P."/>
            <person name="Schultz B.R."/>
            <person name="Wallis J.W."/>
            <person name="Spieth J."/>
            <person name="Bieri T.A."/>
            <person name="Nelson J.O."/>
            <person name="Berkowicz N."/>
            <person name="Wohldmann P.E."/>
            <person name="Cook L.L."/>
            <person name="Hickenbotham M.T."/>
            <person name="Eldred J."/>
            <person name="Williams D."/>
            <person name="Bedell J.A."/>
            <person name="Mardis E.R."/>
            <person name="Clifton S.W."/>
            <person name="Chissoe S.L."/>
            <person name="Marra M.A."/>
            <person name="Raymond C."/>
            <person name="Haugen E."/>
            <person name="Gillett W."/>
            <person name="Zhou Y."/>
            <person name="James R."/>
            <person name="Phelps K."/>
            <person name="Iadanoto S."/>
            <person name="Bubb K."/>
            <person name="Simms E."/>
            <person name="Levy R."/>
            <person name="Clendenning J."/>
            <person name="Kaul R."/>
            <person name="Kent W.J."/>
            <person name="Furey T.S."/>
            <person name="Baertsch R.A."/>
            <person name="Brent M.R."/>
            <person name="Keibler E."/>
            <person name="Flicek P."/>
            <person name="Bork P."/>
            <person name="Suyama M."/>
            <person name="Bailey J.A."/>
            <person name="Portnoy M.E."/>
            <person name="Torrents D."/>
            <person name="Chinwalla A.T."/>
            <person name="Gish W.R."/>
            <person name="Eddy S.R."/>
            <person name="McPherson J.D."/>
            <person name="Olson M.V."/>
            <person name="Eichler E.E."/>
            <person name="Green E.D."/>
            <person name="Waterston R.H."/>
            <person name="Wilson R.K."/>
        </authorList>
    </citation>
    <scope>NUCLEOTIDE SEQUENCE [LARGE SCALE GENOMIC DNA] (IMGT ALLELE TRGV5*01)</scope>
</reference>
<reference key="2">
    <citation type="book" date="2001" name="The T Cell Receptor FactsBook.">
        <title>The T Cell Receptor FactsBook.</title>
        <editorList>
            <person name="Lefranc M.P."/>
            <person name="Lefranc G."/>
        </editorList>
        <authorList>
            <person name="Lefranc M.P."/>
            <person name="Lefranc G."/>
        </authorList>
    </citation>
    <scope>NOMENCLATURE</scope>
</reference>
<reference key="3">
    <citation type="journal article" date="2013" name="Nat. Rev. Immunol.">
        <title>Six-of-the-best: unique contributions of gammadelta T cells to immunology.</title>
        <authorList>
            <person name="Vantourout P."/>
            <person name="Hayday A."/>
        </authorList>
    </citation>
    <scope>REVIEW ON FUNCTION AND ANTIGEN RECOGNITION</scope>
</reference>
<reference key="4">
    <citation type="journal article" date="2014" name="Annu. Rev. Immunol.">
        <title>gammadelta T cells: first line of defense and beyond.</title>
        <authorList>
            <person name="Chien Y.H."/>
            <person name="Meyer C."/>
            <person name="Bonneville M."/>
        </authorList>
    </citation>
    <scope>REVIEW ONGAMMA DELTA T CELL RECEPTOR DIVERSITY</scope>
</reference>
<reference key="5">
    <citation type="journal article" date="2014" name="Front. Immunol.">
        <title>Immunoglobulin and T Cell Receptor Genes: IMGT((R)) and the Birth and Rise of Immunoinformatics.</title>
        <authorList>
            <person name="Lefranc M.P."/>
        </authorList>
    </citation>
    <scope>NOMENCLATURE</scope>
</reference>
<reference key="6">
    <citation type="journal article" date="2015" name="Front. Immunol.">
        <title>Five Layers of Receptor Signaling in gammadelta T-Cell Differentiation and Activation.</title>
        <authorList>
            <person name="Ribeiro S.T."/>
            <person name="Ribot J.C."/>
            <person name="Silva-Santos B."/>
        </authorList>
    </citation>
    <scope>REVIEW ON T CELL RECEPTOR SIGNALING</scope>
    <scope>SUBUNIT</scope>
</reference>
<reference key="7">
    <citation type="journal article" date="2017" name="Nat. Rev. Immunol.">
        <title>gammadelta T cells in homeostasis and host defence of epithelial barrier tissues.</title>
        <authorList>
            <person name="Nielsen M.M."/>
            <person name="Witherden D.A."/>
            <person name="Havran W.L."/>
        </authorList>
    </citation>
    <scope>REVIEW ON FUNCTION</scope>
</reference>
<dbReference type="EMBL" id="AC006033">
    <property type="status" value="NOT_ANNOTATED_CDS"/>
    <property type="molecule type" value="Genomic_DNA"/>
</dbReference>
<dbReference type="PDB" id="8JBV">
    <property type="method" value="EM"/>
    <property type="resolution" value="3.02 A"/>
    <property type="chains" value="N/n=19-118"/>
</dbReference>
<dbReference type="PDB" id="8JCB">
    <property type="method" value="EM"/>
    <property type="resolution" value="9.50 A"/>
    <property type="chains" value="N/n=19-118"/>
</dbReference>
<dbReference type="PDB" id="8WXE">
    <property type="method" value="EM"/>
    <property type="resolution" value="4.00 A"/>
    <property type="chains" value="n=19-118"/>
</dbReference>
<dbReference type="PDBsum" id="8JBV"/>
<dbReference type="PDBsum" id="8JCB"/>
<dbReference type="PDBsum" id="8WXE"/>
<dbReference type="SMR" id="A0A0B4J1U4"/>
<dbReference type="FunCoup" id="A0A0B4J1U4">
    <property type="interactions" value="309"/>
</dbReference>
<dbReference type="IMGT_GENE-DB" id="TRGV5"/>
<dbReference type="GlyCosmos" id="A0A0B4J1U4">
    <property type="glycosylation" value="1 site, No reported glycans"/>
</dbReference>
<dbReference type="GlyGen" id="A0A0B4J1U4">
    <property type="glycosylation" value="3 sites, 1 O-linked glycan (2 sites)"/>
</dbReference>
<dbReference type="BioMuta" id="TRGV5"/>
<dbReference type="Ensembl" id="ENST00000390344.2">
    <property type="protein sequence ID" value="ENSP00000374867.2"/>
    <property type="gene ID" value="ENSG00000211697.4"/>
</dbReference>
<dbReference type="AGR" id="HGNC:12290"/>
<dbReference type="GeneCards" id="TRGV5"/>
<dbReference type="HGNC" id="HGNC:12290">
    <property type="gene designation" value="TRGV5"/>
</dbReference>
<dbReference type="HPA" id="ENSG00000211697">
    <property type="expression patterns" value="Tissue enhanced (lymphoid)"/>
</dbReference>
<dbReference type="neXtProt" id="NX_A0A0B4J1U4"/>
<dbReference type="OpenTargets" id="ENSG00000211697"/>
<dbReference type="VEuPathDB" id="HostDB:ENSG00000211697"/>
<dbReference type="GeneTree" id="ENSGT00940000153143"/>
<dbReference type="InParanoid" id="A0A0B4J1U4"/>
<dbReference type="OMA" id="VITCDIT"/>
<dbReference type="OrthoDB" id="9628507at2759"/>
<dbReference type="PAN-GO" id="A0A0B4J1U4">
    <property type="GO annotations" value="1 GO annotation based on evolutionary models"/>
</dbReference>
<dbReference type="PhylomeDB" id="A0A0B4J1U4"/>
<dbReference type="SignaLink" id="A0A0B4J1U4"/>
<dbReference type="PRO" id="PR:A0A0B4J1U4"/>
<dbReference type="Proteomes" id="UP000005640">
    <property type="component" value="Chromosome 7"/>
</dbReference>
<dbReference type="RNAct" id="A0A0B4J1U4">
    <property type="molecule type" value="protein"/>
</dbReference>
<dbReference type="Bgee" id="ENSG00000211697">
    <property type="expression patterns" value="Expressed in leukocyte and 74 other cell types or tissues"/>
</dbReference>
<dbReference type="GO" id="GO:0009897">
    <property type="term" value="C:external side of plasma membrane"/>
    <property type="evidence" value="ECO:0000318"/>
    <property type="project" value="GO_Central"/>
</dbReference>
<dbReference type="GO" id="GO:0042101">
    <property type="term" value="C:T cell receptor complex"/>
    <property type="evidence" value="ECO:0007669"/>
    <property type="project" value="UniProtKB-KW"/>
</dbReference>
<dbReference type="GO" id="GO:0002250">
    <property type="term" value="P:adaptive immune response"/>
    <property type="evidence" value="ECO:0007669"/>
    <property type="project" value="UniProtKB-KW"/>
</dbReference>
<dbReference type="GO" id="GO:0045087">
    <property type="term" value="P:innate immune response"/>
    <property type="evidence" value="ECO:0007669"/>
    <property type="project" value="UniProtKB-KW"/>
</dbReference>
<dbReference type="FunFam" id="2.60.40.10:FF:001866">
    <property type="entry name" value="T cell receptor gamma variable 3"/>
    <property type="match status" value="1"/>
</dbReference>
<dbReference type="Gene3D" id="2.60.40.10">
    <property type="entry name" value="Immunoglobulins"/>
    <property type="match status" value="1"/>
</dbReference>
<dbReference type="InterPro" id="IPR007110">
    <property type="entry name" value="Ig-like_dom"/>
</dbReference>
<dbReference type="InterPro" id="IPR036179">
    <property type="entry name" value="Ig-like_dom_sf"/>
</dbReference>
<dbReference type="InterPro" id="IPR013783">
    <property type="entry name" value="Ig-like_fold"/>
</dbReference>
<dbReference type="InterPro" id="IPR013106">
    <property type="entry name" value="Ig_V-set"/>
</dbReference>
<dbReference type="InterPro" id="IPR051117">
    <property type="entry name" value="TRG_var/const_region"/>
</dbReference>
<dbReference type="PANTHER" id="PTHR19256:SF63">
    <property type="entry name" value="T CELL RECEPTOR GAMMA VARIABLE 3-RELATED"/>
    <property type="match status" value="1"/>
</dbReference>
<dbReference type="PANTHER" id="PTHR19256">
    <property type="entry name" value="T-CELL RECEPTOR GAMMA CHAIN"/>
    <property type="match status" value="1"/>
</dbReference>
<dbReference type="Pfam" id="PF07686">
    <property type="entry name" value="V-set"/>
    <property type="match status" value="1"/>
</dbReference>
<dbReference type="SUPFAM" id="SSF48726">
    <property type="entry name" value="Immunoglobulin"/>
    <property type="match status" value="1"/>
</dbReference>
<dbReference type="PROSITE" id="PS50835">
    <property type="entry name" value="IG_LIKE"/>
    <property type="match status" value="1"/>
</dbReference>
<feature type="signal peptide" evidence="1">
    <location>
        <begin position="1"/>
        <end position="17"/>
    </location>
</feature>
<feature type="chain" id="PRO_5002105557" description="T cell receptor gamma variable 5" evidence="1">
    <location>
        <begin position="18"/>
        <end position="118"/>
    </location>
</feature>
<feature type="domain" description="Ig-like" evidence="2">
    <location>
        <begin position="18"/>
        <end position="118" status="greater than"/>
    </location>
</feature>
<feature type="glycosylation site" description="N-linked (GlcNAc...) asparagine" evidence="3">
    <location>
        <position position="106"/>
    </location>
</feature>
<feature type="disulfide bond" evidence="2">
    <location>
        <begin position="41"/>
        <end position="113"/>
    </location>
</feature>
<feature type="non-terminal residue">
    <location>
        <position position="118"/>
    </location>
</feature>
<feature type="strand" evidence="12">
    <location>
        <begin position="32"/>
        <end position="34"/>
    </location>
</feature>
<feature type="strand" evidence="12">
    <location>
        <begin position="36"/>
        <end position="40"/>
    </location>
</feature>
<feature type="strand" evidence="12">
    <location>
        <begin position="50"/>
        <end position="56"/>
    </location>
</feature>
<feature type="strand" evidence="12">
    <location>
        <begin position="63"/>
        <end position="69"/>
    </location>
</feature>
<feature type="turn" evidence="12">
    <location>
        <begin position="70"/>
        <end position="73"/>
    </location>
</feature>
<feature type="strand" evidence="12">
    <location>
        <begin position="74"/>
        <end position="76"/>
    </location>
</feature>
<feature type="strand" evidence="12">
    <location>
        <begin position="83"/>
        <end position="89"/>
    </location>
</feature>
<feature type="strand" evidence="12">
    <location>
        <begin position="97"/>
        <end position="102"/>
    </location>
</feature>
<feature type="helix" evidence="12">
    <location>
        <begin position="105"/>
        <end position="107"/>
    </location>
</feature>
<feature type="strand" evidence="12">
    <location>
        <begin position="109"/>
        <end position="116"/>
    </location>
</feature>
<sequence length="118" mass="13601">MRWALLVLLAFLSPASQKSSNLEGGTKSVTRPTRSSAEITCDLTVINAFYIHWYLHQEGKAPQRLLYYDVSNSKDVLESGLSPGKYYTHTPRRWSWILILRNLIENDSGVYYCATWDR</sequence>
<comment type="function">
    <text evidence="4 5 6 7 8">V region of the variable domain of T cell receptor (TR) gamma chain that participates in the antigen recognition (PubMed:24600447). Gamma-delta TRs recognize a variety of self and foreign non-peptide antigens frequently expressed at the epithelial boundaries between the host and external environment, including endogenous lipids presented by MH-like protein CD1D and phosphoantigens presented by butyrophilin-like molecule BTN3A1. Upon antigen recognition induces rapid, innate-like immune responses involved in pathogen clearance and tissue repair (PubMed:23348415, PubMed:28920588). Binding of gamma-delta TR complex to antigen triggers phosphorylation of immunoreceptor tyrosine-based activation motifs (ITAMs) in the CD3 chains by the LCK and FYN kinases, allowing the recruitment, phosphorylation, and activation of ZAP70 that facilitates phosphorylation of the scaffolding proteins LCP2 and LAT. This lead to the formation of a supramolecular signalosome that recruits the phospholipase PLCG1, resulting in calcium mobilization and ERK activation, ultimately leading to T cell expansion and differentiation into effector cells (PubMed:25674089). Gamma-delta TRs are produced through somatic rearrangement of a limited repertoire of variable (V), diversity (D), and joining (J) genes. The potential diversity of gamma-delta TRs is conferred by the unique ability to rearrange (D) genes in tandem and to utilize all three reading frames. The combinatorial diversity is considerably increased by the sequence exonuclease trimming and random nucleotide (N) region additions which occur during the V-(D)-J rearrangements (PubMed:24387714).</text>
</comment>
<comment type="subunit">
    <text evidence="7">Gamma-delta TR is a heterodimer composed of a gamma and delta chain; disulfide-linked. The gamma-delta TR is associated with the transmembrane signaling CD3 coreceptor proteins following the stoichiometry: a single gamma-delta TR heterodimer associates with one CD3D-CD3E heterodimer, one CD3G-CD3E heterodimer and one CD247 homodimer forming a stable octameric structure. Upon activation, gamma-delta TR complex associates with FCER1G to initiate intracellular signaling.</text>
</comment>
<comment type="subcellular location">
    <subcellularLocation>
        <location evidence="10">Cell membrane</location>
    </subcellularLocation>
</comment>
<comment type="polymorphism">
    <text evidence="10">There are several alleles. The sequence shown is that of IMGT allele TRGV5*01.</text>
</comment>
<accession>A0A0B4J1U4</accession>
<protein>
    <recommendedName>
        <fullName evidence="9">T cell receptor gamma variable 5</fullName>
    </recommendedName>
</protein>
<name>TRGV5_HUMAN</name>